<gene>
    <name evidence="1" type="primary">rpsT</name>
    <name type="ordered locus">RB7022</name>
</gene>
<evidence type="ECO:0000255" key="1">
    <source>
        <dbReference type="HAMAP-Rule" id="MF_00500"/>
    </source>
</evidence>
<evidence type="ECO:0000256" key="2">
    <source>
        <dbReference type="SAM" id="MobiDB-lite"/>
    </source>
</evidence>
<evidence type="ECO:0000305" key="3"/>
<name>RS20_RHOBA</name>
<dbReference type="EMBL" id="BX294145">
    <property type="protein sequence ID" value="CAD75133.1"/>
    <property type="molecule type" value="Genomic_DNA"/>
</dbReference>
<dbReference type="RefSeq" id="NP_867586.1">
    <property type="nucleotide sequence ID" value="NC_005027.1"/>
</dbReference>
<dbReference type="RefSeq" id="WP_007326150.1">
    <property type="nucleotide sequence ID" value="NC_005027.1"/>
</dbReference>
<dbReference type="SMR" id="Q7UPC9"/>
<dbReference type="FunCoup" id="Q7UPC9">
    <property type="interactions" value="480"/>
</dbReference>
<dbReference type="STRING" id="243090.RB7022"/>
<dbReference type="EnsemblBacteria" id="CAD75133">
    <property type="protein sequence ID" value="CAD75133"/>
    <property type="gene ID" value="RB7022"/>
</dbReference>
<dbReference type="KEGG" id="rba:RB7022"/>
<dbReference type="PATRIC" id="fig|243090.15.peg.3401"/>
<dbReference type="eggNOG" id="COG0268">
    <property type="taxonomic scope" value="Bacteria"/>
</dbReference>
<dbReference type="HOGENOM" id="CLU_160655_1_0_0"/>
<dbReference type="InParanoid" id="Q7UPC9"/>
<dbReference type="OrthoDB" id="289707at2"/>
<dbReference type="Proteomes" id="UP000001025">
    <property type="component" value="Chromosome"/>
</dbReference>
<dbReference type="GO" id="GO:0005829">
    <property type="term" value="C:cytosol"/>
    <property type="evidence" value="ECO:0000318"/>
    <property type="project" value="GO_Central"/>
</dbReference>
<dbReference type="GO" id="GO:0015935">
    <property type="term" value="C:small ribosomal subunit"/>
    <property type="evidence" value="ECO:0000318"/>
    <property type="project" value="GO_Central"/>
</dbReference>
<dbReference type="GO" id="GO:0070181">
    <property type="term" value="F:small ribosomal subunit rRNA binding"/>
    <property type="evidence" value="ECO:0000318"/>
    <property type="project" value="GO_Central"/>
</dbReference>
<dbReference type="GO" id="GO:0003735">
    <property type="term" value="F:structural constituent of ribosome"/>
    <property type="evidence" value="ECO:0007669"/>
    <property type="project" value="InterPro"/>
</dbReference>
<dbReference type="GO" id="GO:0006412">
    <property type="term" value="P:translation"/>
    <property type="evidence" value="ECO:0007669"/>
    <property type="project" value="UniProtKB-UniRule"/>
</dbReference>
<dbReference type="FunFam" id="1.20.58.110:FF:000001">
    <property type="entry name" value="30S ribosomal protein S20"/>
    <property type="match status" value="1"/>
</dbReference>
<dbReference type="Gene3D" id="1.20.58.110">
    <property type="entry name" value="Ribosomal protein S20"/>
    <property type="match status" value="1"/>
</dbReference>
<dbReference type="HAMAP" id="MF_00500">
    <property type="entry name" value="Ribosomal_bS20"/>
    <property type="match status" value="1"/>
</dbReference>
<dbReference type="InterPro" id="IPR002583">
    <property type="entry name" value="Ribosomal_bS20"/>
</dbReference>
<dbReference type="InterPro" id="IPR036510">
    <property type="entry name" value="Ribosomal_bS20_sf"/>
</dbReference>
<dbReference type="NCBIfam" id="TIGR00029">
    <property type="entry name" value="S20"/>
    <property type="match status" value="1"/>
</dbReference>
<dbReference type="PANTHER" id="PTHR33398">
    <property type="entry name" value="30S RIBOSOMAL PROTEIN S20"/>
    <property type="match status" value="1"/>
</dbReference>
<dbReference type="PANTHER" id="PTHR33398:SF1">
    <property type="entry name" value="SMALL RIBOSOMAL SUBUNIT PROTEIN BS20C"/>
    <property type="match status" value="1"/>
</dbReference>
<dbReference type="Pfam" id="PF01649">
    <property type="entry name" value="Ribosomal_S20p"/>
    <property type="match status" value="1"/>
</dbReference>
<dbReference type="SUPFAM" id="SSF46992">
    <property type="entry name" value="Ribosomal protein S20"/>
    <property type="match status" value="1"/>
</dbReference>
<feature type="chain" id="PRO_0000168020" description="Small ribosomal subunit protein bS20">
    <location>
        <begin position="1"/>
        <end position="90"/>
    </location>
</feature>
<feature type="region of interest" description="Disordered" evidence="2">
    <location>
        <begin position="1"/>
        <end position="28"/>
    </location>
</feature>
<organism>
    <name type="scientific">Rhodopirellula baltica (strain DSM 10527 / NCIMB 13988 / SH1)</name>
    <dbReference type="NCBI Taxonomy" id="243090"/>
    <lineage>
        <taxon>Bacteria</taxon>
        <taxon>Pseudomonadati</taxon>
        <taxon>Planctomycetota</taxon>
        <taxon>Planctomycetia</taxon>
        <taxon>Pirellulales</taxon>
        <taxon>Pirellulaceae</taxon>
        <taxon>Rhodopirellula</taxon>
    </lineage>
</organism>
<comment type="function">
    <text evidence="1">Binds directly to 16S ribosomal RNA.</text>
</comment>
<comment type="similarity">
    <text evidence="1">Belongs to the bacterial ribosomal protein bS20 family.</text>
</comment>
<sequence length="90" mass="10256">MPNTSSASKRLRQNEKRRLLNRATRSNMRSTIRRVREAVENNDLETAKNEFKVAQKKLDRAAANNLIHKNAAARTKSRLNNLIKNAAQTA</sequence>
<keyword id="KW-1185">Reference proteome</keyword>
<keyword id="KW-0687">Ribonucleoprotein</keyword>
<keyword id="KW-0689">Ribosomal protein</keyword>
<keyword id="KW-0694">RNA-binding</keyword>
<keyword id="KW-0699">rRNA-binding</keyword>
<proteinExistence type="inferred from homology"/>
<protein>
    <recommendedName>
        <fullName evidence="1">Small ribosomal subunit protein bS20</fullName>
    </recommendedName>
    <alternativeName>
        <fullName evidence="3">30S ribosomal protein S20</fullName>
    </alternativeName>
</protein>
<accession>Q7UPC9</accession>
<reference key="1">
    <citation type="journal article" date="2003" name="Proc. Natl. Acad. Sci. U.S.A.">
        <title>Complete genome sequence of the marine planctomycete Pirellula sp. strain 1.</title>
        <authorList>
            <person name="Gloeckner F.O."/>
            <person name="Kube M."/>
            <person name="Bauer M."/>
            <person name="Teeling H."/>
            <person name="Lombardot T."/>
            <person name="Ludwig W."/>
            <person name="Gade D."/>
            <person name="Beck A."/>
            <person name="Borzym K."/>
            <person name="Heitmann K."/>
            <person name="Rabus R."/>
            <person name="Schlesner H."/>
            <person name="Amann R."/>
            <person name="Reinhardt R."/>
        </authorList>
    </citation>
    <scope>NUCLEOTIDE SEQUENCE [LARGE SCALE GENOMIC DNA]</scope>
    <source>
        <strain>DSM 10527 / NCIMB 13988 / SH1</strain>
    </source>
</reference>